<gene>
    <name type="primary">COX6C</name>
</gene>
<keyword id="KW-0472">Membrane</keyword>
<keyword id="KW-0496">Mitochondrion</keyword>
<keyword id="KW-0999">Mitochondrion inner membrane</keyword>
<keyword id="KW-0812">Transmembrane</keyword>
<keyword id="KW-1133">Transmembrane helix</keyword>
<feature type="chain" id="PRO_0000006135" description="Cytochrome c oxidase subunit 6C">
    <location>
        <begin position="1"/>
        <end position="75"/>
    </location>
</feature>
<feature type="topological domain" description="Mitochondrial matrix" evidence="1">
    <location>
        <begin position="1"/>
        <end position="13"/>
    </location>
</feature>
<feature type="transmembrane region" description="Helical" evidence="1">
    <location>
        <begin position="14"/>
        <end position="54"/>
    </location>
</feature>
<feature type="topological domain" description="Mitochondrial intermembrane" evidence="1">
    <location>
        <begin position="55"/>
        <end position="75"/>
    </location>
</feature>
<organism>
    <name type="scientific">Nycticebus coucang</name>
    <name type="common">Slow loris</name>
    <dbReference type="NCBI Taxonomy" id="9470"/>
    <lineage>
        <taxon>Eukaryota</taxon>
        <taxon>Metazoa</taxon>
        <taxon>Chordata</taxon>
        <taxon>Craniata</taxon>
        <taxon>Vertebrata</taxon>
        <taxon>Euteleostomi</taxon>
        <taxon>Mammalia</taxon>
        <taxon>Eutheria</taxon>
        <taxon>Euarchontoglires</taxon>
        <taxon>Primates</taxon>
        <taxon>Strepsirrhini</taxon>
        <taxon>Lorisiformes</taxon>
        <taxon>Lorisidae</taxon>
        <taxon>Nycticebus</taxon>
    </lineage>
</organism>
<dbReference type="EMBL" id="AY236512">
    <property type="protein sequence ID" value="AAP43958.1"/>
    <property type="molecule type" value="mRNA"/>
</dbReference>
<dbReference type="SMR" id="Q7YRJ8"/>
<dbReference type="UniPathway" id="UPA00705"/>
<dbReference type="GO" id="GO:0005743">
    <property type="term" value="C:mitochondrial inner membrane"/>
    <property type="evidence" value="ECO:0007669"/>
    <property type="project" value="UniProtKB-SubCell"/>
</dbReference>
<dbReference type="GO" id="GO:0006119">
    <property type="term" value="P:oxidative phosphorylation"/>
    <property type="evidence" value="ECO:0007669"/>
    <property type="project" value="UniProtKB-UniPathway"/>
</dbReference>
<dbReference type="CDD" id="cd22901">
    <property type="entry name" value="CcO_VIc"/>
    <property type="match status" value="1"/>
</dbReference>
<dbReference type="FunFam" id="4.10.93.10:FF:000001">
    <property type="entry name" value="Cytochrome c oxidase subunit 6C"/>
    <property type="match status" value="1"/>
</dbReference>
<dbReference type="Gene3D" id="4.10.93.10">
    <property type="entry name" value="Mitochondrial cytochrome c oxidase subunit VIc/VIIs"/>
    <property type="match status" value="1"/>
</dbReference>
<dbReference type="InterPro" id="IPR051389">
    <property type="entry name" value="Cytochrome_c_oxidase_VIc"/>
</dbReference>
<dbReference type="InterPro" id="IPR034884">
    <property type="entry name" value="Cytochrome_c_oxidase_VIc/VIIs"/>
</dbReference>
<dbReference type="InterPro" id="IPR037169">
    <property type="entry name" value="Cytochrome_c_oxidase_VIc_sf"/>
</dbReference>
<dbReference type="PANTHER" id="PTHR48416">
    <property type="entry name" value="CYTOCHROME C OXIDASE SUBUNIT 6C"/>
    <property type="match status" value="1"/>
</dbReference>
<dbReference type="PANTHER" id="PTHR48416:SF1">
    <property type="entry name" value="CYTOCHROME C OXIDASE SUBUNIT 6C"/>
    <property type="match status" value="1"/>
</dbReference>
<dbReference type="Pfam" id="PF02937">
    <property type="entry name" value="COX6C"/>
    <property type="match status" value="1"/>
</dbReference>
<dbReference type="SUPFAM" id="SSF81415">
    <property type="entry name" value="Mitochondrial cytochrome c oxidase subunit VIc"/>
    <property type="match status" value="1"/>
</dbReference>
<evidence type="ECO:0000250" key="1">
    <source>
        <dbReference type="UniProtKB" id="P04038"/>
    </source>
</evidence>
<evidence type="ECO:0000305" key="2"/>
<name>COX6C_NYCCO</name>
<accession>Q7YRJ8</accession>
<sequence length="75" mass="8538">MASSALAKPQMRGLLARRLRIHIVGAFVVSLGVAAFYKYAVAEPRKKAYADFYRNYDSVKYFEEMRKAGVFQSVK</sequence>
<reference key="1">
    <citation type="submission" date="2003-02" db="EMBL/GenBank/DDBJ databases">
        <title>Co-evolution in cytochrome c oxidase: 9 of 13 subunits show accelerated rates of nonsynonymous substitution in anthropoid primates.</title>
        <authorList>
            <person name="Doan J.W."/>
            <person name="Schmidt T.R."/>
            <person name="Wildman D.E."/>
            <person name="Goldberg A."/>
            <person name="Huttemann M."/>
            <person name="Goodman M."/>
            <person name="Weiss M.L."/>
            <person name="Grossman L.I."/>
        </authorList>
    </citation>
    <scope>NUCLEOTIDE SEQUENCE [MRNA]</scope>
</reference>
<protein>
    <recommendedName>
        <fullName>Cytochrome c oxidase subunit 6C</fullName>
    </recommendedName>
    <alternativeName>
        <fullName>Cytochrome c oxidase polypeptide VIc</fullName>
    </alternativeName>
</protein>
<comment type="function">
    <text evidence="1">Component of the cytochrome c oxidase, the last enzyme in the mitochondrial electron transport chain which drives oxidative phosphorylation. The respiratory chain contains 3 multisubunit complexes succinate dehydrogenase (complex II, CII), ubiquinol-cytochrome c oxidoreductase (cytochrome b-c1 complex, complex III, CIII) and cytochrome c oxidase (complex IV, CIV), that cooperate to transfer electrons derived from NADH and succinate to molecular oxygen, creating an electrochemical gradient over the inner membrane that drives transmembrane transport and the ATP synthase. Cytochrome c oxidase is the component of the respiratory chain that catalyzes the reduction of oxygen to water. Electrons originating from reduced cytochrome c in the intermembrane space (IMS) are transferred via the dinuclear copper A center (CU(A)) of subunit 2 and heme A of subunit 1 to the active site in subunit 1, a binuclear center (BNC) formed by heme A3 and copper B (CU(B)). The BNC reduces molecular oxygen to 2 water molecules using 4 electrons from cytochrome c in the IMS and 4 protons from the mitochondrial matrix.</text>
</comment>
<comment type="pathway">
    <text evidence="1">Energy metabolism; oxidative phosphorylation.</text>
</comment>
<comment type="subunit">
    <text evidence="1">Component of the cytochrome c oxidase (complex IV, CIV), a multisubunit enzyme composed of 14 subunits. The complex is composed of a catalytic core of 3 subunits MT-CO1, MT-CO2 and MT-CO3, encoded in the mitochondrial DNA, and 11 supernumerary subunits COX4I, COX5A, COX5B, COX6A, COX6B, COX6C, COX7A, COX7B, COX7C, COX8 and NDUFA4, which are encoded in the nuclear genome. The complex exists as a monomer or a dimer and forms supercomplexes (SCs) in the inner mitochondrial membrane with NADH-ubiquinone oxidoreductase (complex I, CI) and ubiquinol-cytochrome c oxidoreductase (cytochrome b-c1 complex, complex III, CIII), resulting in different assemblies (supercomplex SCI(1)III(2)IV(1) and megacomplex MCI(2)III(2)IV(2)).</text>
</comment>
<comment type="subcellular location">
    <subcellularLocation>
        <location evidence="1">Mitochondrion inner membrane</location>
        <topology evidence="1">Single-pass membrane protein</topology>
    </subcellularLocation>
</comment>
<comment type="similarity">
    <text evidence="2">Belongs to the cytochrome c oxidase subunit 6c family.</text>
</comment>
<proteinExistence type="inferred from homology"/>